<sequence>MKDIRIAIDGPASSGKSTVAKIIAKNLGYTYLDTGAMYRSATYLALQNGLTEENVPEILDQLSQYPISFGKAADGSPKVYVGDVDITHPIRDNQVTNNVSWVAAIPEVRQELVSQQQRIAQEGGIIMDGRDIGTVVLPDAELKIFMIASVDERAERRYKENIEKGIPADLETLKKEIAERDYKDSHREVSPLRPAEDAITFDTTGVSIDGVVEFIQEKAKKIIDKG</sequence>
<dbReference type="EC" id="2.7.4.25" evidence="1"/>
<dbReference type="EMBL" id="CP000419">
    <property type="protein sequence ID" value="ABJ66284.1"/>
    <property type="molecule type" value="Genomic_DNA"/>
</dbReference>
<dbReference type="RefSeq" id="WP_011681187.1">
    <property type="nucleotide sequence ID" value="NC_008532.1"/>
</dbReference>
<dbReference type="SMR" id="Q03KI8"/>
<dbReference type="KEGG" id="ste:STER_1090"/>
<dbReference type="HOGENOM" id="CLU_079959_0_2_9"/>
<dbReference type="GO" id="GO:0005829">
    <property type="term" value="C:cytosol"/>
    <property type="evidence" value="ECO:0007669"/>
    <property type="project" value="TreeGrafter"/>
</dbReference>
<dbReference type="GO" id="GO:0005524">
    <property type="term" value="F:ATP binding"/>
    <property type="evidence" value="ECO:0007669"/>
    <property type="project" value="UniProtKB-UniRule"/>
</dbReference>
<dbReference type="GO" id="GO:0036430">
    <property type="term" value="F:CMP kinase activity"/>
    <property type="evidence" value="ECO:0007669"/>
    <property type="project" value="RHEA"/>
</dbReference>
<dbReference type="GO" id="GO:0036431">
    <property type="term" value="F:dCMP kinase activity"/>
    <property type="evidence" value="ECO:0007669"/>
    <property type="project" value="RHEA"/>
</dbReference>
<dbReference type="GO" id="GO:0015949">
    <property type="term" value="P:nucleobase-containing small molecule interconversion"/>
    <property type="evidence" value="ECO:0007669"/>
    <property type="project" value="TreeGrafter"/>
</dbReference>
<dbReference type="GO" id="GO:0006220">
    <property type="term" value="P:pyrimidine nucleotide metabolic process"/>
    <property type="evidence" value="ECO:0007669"/>
    <property type="project" value="UniProtKB-UniRule"/>
</dbReference>
<dbReference type="CDD" id="cd02020">
    <property type="entry name" value="CMPK"/>
    <property type="match status" value="1"/>
</dbReference>
<dbReference type="FunFam" id="3.40.50.300:FF:000484">
    <property type="entry name" value="Cytidylate kinase"/>
    <property type="match status" value="1"/>
</dbReference>
<dbReference type="Gene3D" id="3.40.50.300">
    <property type="entry name" value="P-loop containing nucleotide triphosphate hydrolases"/>
    <property type="match status" value="1"/>
</dbReference>
<dbReference type="HAMAP" id="MF_00238">
    <property type="entry name" value="Cytidyl_kinase_type1"/>
    <property type="match status" value="1"/>
</dbReference>
<dbReference type="InterPro" id="IPR003136">
    <property type="entry name" value="Cytidylate_kin"/>
</dbReference>
<dbReference type="InterPro" id="IPR011994">
    <property type="entry name" value="Cytidylate_kinase_dom"/>
</dbReference>
<dbReference type="InterPro" id="IPR027417">
    <property type="entry name" value="P-loop_NTPase"/>
</dbReference>
<dbReference type="NCBIfam" id="TIGR00017">
    <property type="entry name" value="cmk"/>
    <property type="match status" value="1"/>
</dbReference>
<dbReference type="PANTHER" id="PTHR21299:SF2">
    <property type="entry name" value="CYTIDYLATE KINASE"/>
    <property type="match status" value="1"/>
</dbReference>
<dbReference type="PANTHER" id="PTHR21299">
    <property type="entry name" value="CYTIDYLATE KINASE/PANTOATE-BETA-ALANINE LIGASE"/>
    <property type="match status" value="1"/>
</dbReference>
<dbReference type="Pfam" id="PF02224">
    <property type="entry name" value="Cytidylate_kin"/>
    <property type="match status" value="1"/>
</dbReference>
<dbReference type="SUPFAM" id="SSF52540">
    <property type="entry name" value="P-loop containing nucleoside triphosphate hydrolases"/>
    <property type="match status" value="1"/>
</dbReference>
<reference key="1">
    <citation type="journal article" date="2006" name="Proc. Natl. Acad. Sci. U.S.A.">
        <title>Comparative genomics of the lactic acid bacteria.</title>
        <authorList>
            <person name="Makarova K.S."/>
            <person name="Slesarev A."/>
            <person name="Wolf Y.I."/>
            <person name="Sorokin A."/>
            <person name="Mirkin B."/>
            <person name="Koonin E.V."/>
            <person name="Pavlov A."/>
            <person name="Pavlova N."/>
            <person name="Karamychev V."/>
            <person name="Polouchine N."/>
            <person name="Shakhova V."/>
            <person name="Grigoriev I."/>
            <person name="Lou Y."/>
            <person name="Rohksar D."/>
            <person name="Lucas S."/>
            <person name="Huang K."/>
            <person name="Goodstein D.M."/>
            <person name="Hawkins T."/>
            <person name="Plengvidhya V."/>
            <person name="Welker D."/>
            <person name="Hughes J."/>
            <person name="Goh Y."/>
            <person name="Benson A."/>
            <person name="Baldwin K."/>
            <person name="Lee J.-H."/>
            <person name="Diaz-Muniz I."/>
            <person name="Dosti B."/>
            <person name="Smeianov V."/>
            <person name="Wechter W."/>
            <person name="Barabote R."/>
            <person name="Lorca G."/>
            <person name="Altermann E."/>
            <person name="Barrangou R."/>
            <person name="Ganesan B."/>
            <person name="Xie Y."/>
            <person name="Rawsthorne H."/>
            <person name="Tamir D."/>
            <person name="Parker C."/>
            <person name="Breidt F."/>
            <person name="Broadbent J.R."/>
            <person name="Hutkins R."/>
            <person name="O'Sullivan D."/>
            <person name="Steele J."/>
            <person name="Unlu G."/>
            <person name="Saier M.H. Jr."/>
            <person name="Klaenhammer T."/>
            <person name="Richardson P."/>
            <person name="Kozyavkin S."/>
            <person name="Weimer B.C."/>
            <person name="Mills D.A."/>
        </authorList>
    </citation>
    <scope>NUCLEOTIDE SEQUENCE [LARGE SCALE GENOMIC DNA]</scope>
    <source>
        <strain>ATCC BAA-491 / LMD-9</strain>
    </source>
</reference>
<gene>
    <name evidence="1" type="primary">cmk</name>
    <name type="ordered locus">STER_1090</name>
</gene>
<feature type="chain" id="PRO_1000048306" description="Cytidylate kinase">
    <location>
        <begin position="1"/>
        <end position="226"/>
    </location>
</feature>
<feature type="binding site" evidence="1">
    <location>
        <begin position="10"/>
        <end position="18"/>
    </location>
    <ligand>
        <name>ATP</name>
        <dbReference type="ChEBI" id="CHEBI:30616"/>
    </ligand>
</feature>
<keyword id="KW-0067">ATP-binding</keyword>
<keyword id="KW-0963">Cytoplasm</keyword>
<keyword id="KW-0418">Kinase</keyword>
<keyword id="KW-0547">Nucleotide-binding</keyword>
<keyword id="KW-0808">Transferase</keyword>
<protein>
    <recommendedName>
        <fullName evidence="1">Cytidylate kinase</fullName>
        <shortName evidence="1">CK</shortName>
        <ecNumber evidence="1">2.7.4.25</ecNumber>
    </recommendedName>
    <alternativeName>
        <fullName evidence="1">Cytidine monophosphate kinase</fullName>
        <shortName evidence="1">CMP kinase</shortName>
    </alternativeName>
</protein>
<comment type="catalytic activity">
    <reaction evidence="1">
        <text>CMP + ATP = CDP + ADP</text>
        <dbReference type="Rhea" id="RHEA:11600"/>
        <dbReference type="ChEBI" id="CHEBI:30616"/>
        <dbReference type="ChEBI" id="CHEBI:58069"/>
        <dbReference type="ChEBI" id="CHEBI:60377"/>
        <dbReference type="ChEBI" id="CHEBI:456216"/>
        <dbReference type="EC" id="2.7.4.25"/>
    </reaction>
</comment>
<comment type="catalytic activity">
    <reaction evidence="1">
        <text>dCMP + ATP = dCDP + ADP</text>
        <dbReference type="Rhea" id="RHEA:25094"/>
        <dbReference type="ChEBI" id="CHEBI:30616"/>
        <dbReference type="ChEBI" id="CHEBI:57566"/>
        <dbReference type="ChEBI" id="CHEBI:58593"/>
        <dbReference type="ChEBI" id="CHEBI:456216"/>
        <dbReference type="EC" id="2.7.4.25"/>
    </reaction>
</comment>
<comment type="subcellular location">
    <subcellularLocation>
        <location evidence="1">Cytoplasm</location>
    </subcellularLocation>
</comment>
<comment type="similarity">
    <text evidence="1">Belongs to the cytidylate kinase family. Type 1 subfamily.</text>
</comment>
<name>KCY_STRTD</name>
<evidence type="ECO:0000255" key="1">
    <source>
        <dbReference type="HAMAP-Rule" id="MF_00238"/>
    </source>
</evidence>
<organism>
    <name type="scientific">Streptococcus thermophilus (strain ATCC BAA-491 / LMD-9)</name>
    <dbReference type="NCBI Taxonomy" id="322159"/>
    <lineage>
        <taxon>Bacteria</taxon>
        <taxon>Bacillati</taxon>
        <taxon>Bacillota</taxon>
        <taxon>Bacilli</taxon>
        <taxon>Lactobacillales</taxon>
        <taxon>Streptococcaceae</taxon>
        <taxon>Streptococcus</taxon>
    </lineage>
</organism>
<accession>Q03KI8</accession>
<proteinExistence type="inferred from homology"/>